<dbReference type="EC" id="3.5.1.88" evidence="1"/>
<dbReference type="EMBL" id="CP000921">
    <property type="protein sequence ID" value="ACO23646.1"/>
    <property type="molecule type" value="Genomic_DNA"/>
</dbReference>
<dbReference type="RefSeq" id="WP_001272941.1">
    <property type="nucleotide sequence ID" value="NC_012469.1"/>
</dbReference>
<dbReference type="SMR" id="C1CQR2"/>
<dbReference type="GeneID" id="45653294"/>
<dbReference type="KEGG" id="snt:SPT_0819"/>
<dbReference type="HOGENOM" id="CLU_061901_4_0_9"/>
<dbReference type="GO" id="GO:0046872">
    <property type="term" value="F:metal ion binding"/>
    <property type="evidence" value="ECO:0007669"/>
    <property type="project" value="UniProtKB-KW"/>
</dbReference>
<dbReference type="GO" id="GO:0042586">
    <property type="term" value="F:peptide deformylase activity"/>
    <property type="evidence" value="ECO:0007669"/>
    <property type="project" value="UniProtKB-UniRule"/>
</dbReference>
<dbReference type="GO" id="GO:0043686">
    <property type="term" value="P:co-translational protein modification"/>
    <property type="evidence" value="ECO:0007669"/>
    <property type="project" value="TreeGrafter"/>
</dbReference>
<dbReference type="GO" id="GO:0006412">
    <property type="term" value="P:translation"/>
    <property type="evidence" value="ECO:0007669"/>
    <property type="project" value="UniProtKB-UniRule"/>
</dbReference>
<dbReference type="CDD" id="cd00487">
    <property type="entry name" value="Pep_deformylase"/>
    <property type="match status" value="1"/>
</dbReference>
<dbReference type="FunFam" id="3.90.45.10:FF:000002">
    <property type="entry name" value="Peptide deformylase"/>
    <property type="match status" value="1"/>
</dbReference>
<dbReference type="Gene3D" id="3.90.45.10">
    <property type="entry name" value="Peptide deformylase"/>
    <property type="match status" value="1"/>
</dbReference>
<dbReference type="HAMAP" id="MF_00163">
    <property type="entry name" value="Pep_deformylase"/>
    <property type="match status" value="1"/>
</dbReference>
<dbReference type="InterPro" id="IPR023635">
    <property type="entry name" value="Peptide_deformylase"/>
</dbReference>
<dbReference type="InterPro" id="IPR036821">
    <property type="entry name" value="Peptide_deformylase_sf"/>
</dbReference>
<dbReference type="NCBIfam" id="TIGR00079">
    <property type="entry name" value="pept_deformyl"/>
    <property type="match status" value="1"/>
</dbReference>
<dbReference type="PANTHER" id="PTHR10458">
    <property type="entry name" value="PEPTIDE DEFORMYLASE"/>
    <property type="match status" value="1"/>
</dbReference>
<dbReference type="PANTHER" id="PTHR10458:SF8">
    <property type="entry name" value="PEPTIDE DEFORMYLASE 2"/>
    <property type="match status" value="1"/>
</dbReference>
<dbReference type="Pfam" id="PF01327">
    <property type="entry name" value="Pep_deformylase"/>
    <property type="match status" value="1"/>
</dbReference>
<dbReference type="PIRSF" id="PIRSF004749">
    <property type="entry name" value="Pep_def"/>
    <property type="match status" value="1"/>
</dbReference>
<dbReference type="PRINTS" id="PR01576">
    <property type="entry name" value="PDEFORMYLASE"/>
</dbReference>
<dbReference type="SUPFAM" id="SSF56420">
    <property type="entry name" value="Peptide deformylase"/>
    <property type="match status" value="1"/>
</dbReference>
<proteinExistence type="inferred from homology"/>
<protein>
    <recommendedName>
        <fullName evidence="1">Peptide deformylase</fullName>
        <shortName evidence="1">PDF</shortName>
        <ecNumber evidence="1">3.5.1.88</ecNumber>
    </recommendedName>
    <alternativeName>
        <fullName evidence="1">Polypeptide deformylase</fullName>
    </alternativeName>
</protein>
<comment type="function">
    <text evidence="1">Removes the formyl group from the N-terminal Met of newly synthesized proteins. Requires at least a dipeptide for an efficient rate of reaction. N-terminal L-methionine is a prerequisite for activity but the enzyme has broad specificity at other positions.</text>
</comment>
<comment type="catalytic activity">
    <reaction evidence="1">
        <text>N-terminal N-formyl-L-methionyl-[peptide] + H2O = N-terminal L-methionyl-[peptide] + formate</text>
        <dbReference type="Rhea" id="RHEA:24420"/>
        <dbReference type="Rhea" id="RHEA-COMP:10639"/>
        <dbReference type="Rhea" id="RHEA-COMP:10640"/>
        <dbReference type="ChEBI" id="CHEBI:15377"/>
        <dbReference type="ChEBI" id="CHEBI:15740"/>
        <dbReference type="ChEBI" id="CHEBI:49298"/>
        <dbReference type="ChEBI" id="CHEBI:64731"/>
        <dbReference type="EC" id="3.5.1.88"/>
    </reaction>
</comment>
<comment type="cofactor">
    <cofactor evidence="1">
        <name>Fe(2+)</name>
        <dbReference type="ChEBI" id="CHEBI:29033"/>
    </cofactor>
    <text evidence="1">Binds 1 Fe(2+) ion.</text>
</comment>
<comment type="similarity">
    <text evidence="1">Belongs to the polypeptide deformylase family.</text>
</comment>
<evidence type="ECO:0000255" key="1">
    <source>
        <dbReference type="HAMAP-Rule" id="MF_00163"/>
    </source>
</evidence>
<sequence length="203" mass="22676">MSAIERITKAAHLIDMNDIIREGNPTLRAIAEEVTFPLSDQEIILGEKMMQFLKHSQDPVMAEKMGLRGGVGLAAPQLDISKRIIAVLVPNIVEEGETPQEAYDLEAIMYNPKIVSHSVQDAALGEGEGCLSVDRNVPGYVVRHARVTVDYFDKDGEKHRIKLKGYNSIVVQHEIDHINGIMFYDRINEKDPFAVKDGLLILE</sequence>
<accession>C1CQR2</accession>
<organism>
    <name type="scientific">Streptococcus pneumoniae (strain Taiwan19F-14)</name>
    <dbReference type="NCBI Taxonomy" id="487213"/>
    <lineage>
        <taxon>Bacteria</taxon>
        <taxon>Bacillati</taxon>
        <taxon>Bacillota</taxon>
        <taxon>Bacilli</taxon>
        <taxon>Lactobacillales</taxon>
        <taxon>Streptococcaceae</taxon>
        <taxon>Streptococcus</taxon>
    </lineage>
</organism>
<reference key="1">
    <citation type="journal article" date="2010" name="Genome Biol.">
        <title>Structure and dynamics of the pan-genome of Streptococcus pneumoniae and closely related species.</title>
        <authorList>
            <person name="Donati C."/>
            <person name="Hiller N.L."/>
            <person name="Tettelin H."/>
            <person name="Muzzi A."/>
            <person name="Croucher N.J."/>
            <person name="Angiuoli S.V."/>
            <person name="Oggioni M."/>
            <person name="Dunning Hotopp J.C."/>
            <person name="Hu F.Z."/>
            <person name="Riley D.R."/>
            <person name="Covacci A."/>
            <person name="Mitchell T.J."/>
            <person name="Bentley S.D."/>
            <person name="Kilian M."/>
            <person name="Ehrlich G.D."/>
            <person name="Rappuoli R."/>
            <person name="Moxon E.R."/>
            <person name="Masignani V."/>
        </authorList>
    </citation>
    <scope>NUCLEOTIDE SEQUENCE [LARGE SCALE GENOMIC DNA]</scope>
    <source>
        <strain>Taiwan19F-14</strain>
    </source>
</reference>
<feature type="chain" id="PRO_1000200751" description="Peptide deformylase">
    <location>
        <begin position="1"/>
        <end position="203"/>
    </location>
</feature>
<feature type="active site" evidence="1">
    <location>
        <position position="174"/>
    </location>
</feature>
<feature type="binding site" evidence="1">
    <location>
        <position position="130"/>
    </location>
    <ligand>
        <name>Fe cation</name>
        <dbReference type="ChEBI" id="CHEBI:24875"/>
    </ligand>
</feature>
<feature type="binding site" evidence="1">
    <location>
        <position position="173"/>
    </location>
    <ligand>
        <name>Fe cation</name>
        <dbReference type="ChEBI" id="CHEBI:24875"/>
    </ligand>
</feature>
<feature type="binding site" evidence="1">
    <location>
        <position position="177"/>
    </location>
    <ligand>
        <name>Fe cation</name>
        <dbReference type="ChEBI" id="CHEBI:24875"/>
    </ligand>
</feature>
<keyword id="KW-0378">Hydrolase</keyword>
<keyword id="KW-0408">Iron</keyword>
<keyword id="KW-0479">Metal-binding</keyword>
<keyword id="KW-0648">Protein biosynthesis</keyword>
<name>DEF_STRZT</name>
<gene>
    <name evidence="1" type="primary">def</name>
    <name type="ordered locus">SPT_0819</name>
</gene>